<feature type="chain" id="PRO_1000099102" description="GTPase Der">
    <location>
        <begin position="1"/>
        <end position="438"/>
    </location>
</feature>
<feature type="domain" description="EngA-type G 1">
    <location>
        <begin position="3"/>
        <end position="168"/>
    </location>
</feature>
<feature type="domain" description="EngA-type G 2">
    <location>
        <begin position="179"/>
        <end position="354"/>
    </location>
</feature>
<feature type="domain" description="KH-like" evidence="1">
    <location>
        <begin position="355"/>
        <end position="438"/>
    </location>
</feature>
<feature type="binding site" evidence="1">
    <location>
        <begin position="9"/>
        <end position="16"/>
    </location>
    <ligand>
        <name>GTP</name>
        <dbReference type="ChEBI" id="CHEBI:37565"/>
        <label>1</label>
    </ligand>
</feature>
<feature type="binding site" evidence="1">
    <location>
        <begin position="56"/>
        <end position="60"/>
    </location>
    <ligand>
        <name>GTP</name>
        <dbReference type="ChEBI" id="CHEBI:37565"/>
        <label>1</label>
    </ligand>
</feature>
<feature type="binding site" evidence="1">
    <location>
        <begin position="120"/>
        <end position="123"/>
    </location>
    <ligand>
        <name>GTP</name>
        <dbReference type="ChEBI" id="CHEBI:37565"/>
        <label>1</label>
    </ligand>
</feature>
<feature type="binding site" evidence="1">
    <location>
        <begin position="185"/>
        <end position="192"/>
    </location>
    <ligand>
        <name>GTP</name>
        <dbReference type="ChEBI" id="CHEBI:37565"/>
        <label>2</label>
    </ligand>
</feature>
<feature type="binding site" evidence="1">
    <location>
        <begin position="232"/>
        <end position="236"/>
    </location>
    <ligand>
        <name>GTP</name>
        <dbReference type="ChEBI" id="CHEBI:37565"/>
        <label>2</label>
    </ligand>
</feature>
<feature type="binding site" evidence="1">
    <location>
        <begin position="297"/>
        <end position="300"/>
    </location>
    <ligand>
        <name>GTP</name>
        <dbReference type="ChEBI" id="CHEBI:37565"/>
        <label>2</label>
    </ligand>
</feature>
<reference key="1">
    <citation type="submission" date="2008-06" db="EMBL/GenBank/DDBJ databases">
        <title>Complete sequence of Chlorobaculum parvum NCIB 8327.</title>
        <authorList>
            <consortium name="US DOE Joint Genome Institute"/>
            <person name="Lucas S."/>
            <person name="Copeland A."/>
            <person name="Lapidus A."/>
            <person name="Glavina del Rio T."/>
            <person name="Dalin E."/>
            <person name="Tice H."/>
            <person name="Bruce D."/>
            <person name="Goodwin L."/>
            <person name="Pitluck S."/>
            <person name="Schmutz J."/>
            <person name="Larimer F."/>
            <person name="Land M."/>
            <person name="Hauser L."/>
            <person name="Kyrpides N."/>
            <person name="Mikhailova N."/>
            <person name="Zhao F."/>
            <person name="Li T."/>
            <person name="Liu Z."/>
            <person name="Overmann J."/>
            <person name="Bryant D.A."/>
            <person name="Richardson P."/>
        </authorList>
    </citation>
    <scope>NUCLEOTIDE SEQUENCE [LARGE SCALE GENOMIC DNA]</scope>
    <source>
        <strain>DSM 263 / NCIMB 8327</strain>
    </source>
</reference>
<accession>B3QLF4</accession>
<keyword id="KW-0342">GTP-binding</keyword>
<keyword id="KW-0547">Nucleotide-binding</keyword>
<keyword id="KW-0677">Repeat</keyword>
<keyword id="KW-0690">Ribosome biogenesis</keyword>
<name>DER_CHLP8</name>
<dbReference type="EMBL" id="CP001099">
    <property type="protein sequence ID" value="ACF10844.1"/>
    <property type="molecule type" value="Genomic_DNA"/>
</dbReference>
<dbReference type="RefSeq" id="WP_012501677.1">
    <property type="nucleotide sequence ID" value="NC_011027.1"/>
</dbReference>
<dbReference type="SMR" id="B3QLF4"/>
<dbReference type="STRING" id="517417.Cpar_0422"/>
<dbReference type="KEGG" id="cpc:Cpar_0422"/>
<dbReference type="eggNOG" id="COG1160">
    <property type="taxonomic scope" value="Bacteria"/>
</dbReference>
<dbReference type="HOGENOM" id="CLU_016077_6_2_10"/>
<dbReference type="OrthoDB" id="9805918at2"/>
<dbReference type="Proteomes" id="UP000008811">
    <property type="component" value="Chromosome"/>
</dbReference>
<dbReference type="GO" id="GO:0005525">
    <property type="term" value="F:GTP binding"/>
    <property type="evidence" value="ECO:0007669"/>
    <property type="project" value="UniProtKB-UniRule"/>
</dbReference>
<dbReference type="GO" id="GO:0042254">
    <property type="term" value="P:ribosome biogenesis"/>
    <property type="evidence" value="ECO:0007669"/>
    <property type="project" value="UniProtKB-KW"/>
</dbReference>
<dbReference type="CDD" id="cd01894">
    <property type="entry name" value="EngA1"/>
    <property type="match status" value="1"/>
</dbReference>
<dbReference type="CDD" id="cd01895">
    <property type="entry name" value="EngA2"/>
    <property type="match status" value="1"/>
</dbReference>
<dbReference type="FunFam" id="3.30.300.20:FF:000004">
    <property type="entry name" value="GTPase Der"/>
    <property type="match status" value="1"/>
</dbReference>
<dbReference type="FunFam" id="3.40.50.300:FF:000040">
    <property type="entry name" value="GTPase Der"/>
    <property type="match status" value="1"/>
</dbReference>
<dbReference type="Gene3D" id="3.30.300.20">
    <property type="match status" value="1"/>
</dbReference>
<dbReference type="Gene3D" id="3.40.50.300">
    <property type="entry name" value="P-loop containing nucleotide triphosphate hydrolases"/>
    <property type="match status" value="2"/>
</dbReference>
<dbReference type="HAMAP" id="MF_00195">
    <property type="entry name" value="GTPase_Der"/>
    <property type="match status" value="1"/>
</dbReference>
<dbReference type="InterPro" id="IPR031166">
    <property type="entry name" value="G_ENGA"/>
</dbReference>
<dbReference type="InterPro" id="IPR006073">
    <property type="entry name" value="GTP-bd"/>
</dbReference>
<dbReference type="InterPro" id="IPR016484">
    <property type="entry name" value="GTPase_Der"/>
</dbReference>
<dbReference type="InterPro" id="IPR032859">
    <property type="entry name" value="KH_dom-like"/>
</dbReference>
<dbReference type="InterPro" id="IPR015946">
    <property type="entry name" value="KH_dom-like_a/b"/>
</dbReference>
<dbReference type="InterPro" id="IPR027417">
    <property type="entry name" value="P-loop_NTPase"/>
</dbReference>
<dbReference type="InterPro" id="IPR005225">
    <property type="entry name" value="Small_GTP-bd"/>
</dbReference>
<dbReference type="NCBIfam" id="TIGR03594">
    <property type="entry name" value="GTPase_EngA"/>
    <property type="match status" value="1"/>
</dbReference>
<dbReference type="NCBIfam" id="TIGR00231">
    <property type="entry name" value="small_GTP"/>
    <property type="match status" value="2"/>
</dbReference>
<dbReference type="PANTHER" id="PTHR43834">
    <property type="entry name" value="GTPASE DER"/>
    <property type="match status" value="1"/>
</dbReference>
<dbReference type="PANTHER" id="PTHR43834:SF6">
    <property type="entry name" value="GTPASE DER"/>
    <property type="match status" value="1"/>
</dbReference>
<dbReference type="Pfam" id="PF14714">
    <property type="entry name" value="KH_dom-like"/>
    <property type="match status" value="1"/>
</dbReference>
<dbReference type="Pfam" id="PF01926">
    <property type="entry name" value="MMR_HSR1"/>
    <property type="match status" value="2"/>
</dbReference>
<dbReference type="PIRSF" id="PIRSF006485">
    <property type="entry name" value="GTP-binding_EngA"/>
    <property type="match status" value="1"/>
</dbReference>
<dbReference type="PRINTS" id="PR00326">
    <property type="entry name" value="GTP1OBG"/>
</dbReference>
<dbReference type="SUPFAM" id="SSF52540">
    <property type="entry name" value="P-loop containing nucleoside triphosphate hydrolases"/>
    <property type="match status" value="2"/>
</dbReference>
<dbReference type="PROSITE" id="PS51712">
    <property type="entry name" value="G_ENGA"/>
    <property type="match status" value="2"/>
</dbReference>
<sequence length="438" mass="49088">MKPLIALVGRPNVGKSTLFNRILRQKSAIVDPTPGVTRDRHINPGEWQGKQFLLMDTGGYAPENDSLSVAMLDQTMRAIADADAIIFMVDARSGLTYLDLDIAKILKQTFSDKKIFFAINKVDNPQLALEAAAMVRSGFTEPYLISARDGGGVADMLDDILETLPCPESEDEELDDDSIKLAVLGRPNVGKSSLVNALLGTDRQIVSDVPGTTRDAIDSVLKRNGKEYILIDTAGLRKRTKIDPGIEYYSSLRTERAIERCQVALVLLDAQLGLESQDMKIIHMAIERKKGVLILVNKWDLVEKDSKTSKKFTDNLMMQLGNIGYIPIIFTSALTKKNCYRAIDTAAQIAINRRQKISTSNLNRFLQEALAMRHPASKSGKELKIKYMTQIEAGHPVFAFFCNDPQLLENNFKRFLEKRLRESFDFEGLPITMRFLRK</sequence>
<comment type="function">
    <text evidence="1">GTPase that plays an essential role in the late steps of ribosome biogenesis.</text>
</comment>
<comment type="subunit">
    <text evidence="1">Associates with the 50S ribosomal subunit.</text>
</comment>
<comment type="similarity">
    <text evidence="1">Belongs to the TRAFAC class TrmE-Era-EngA-EngB-Septin-like GTPase superfamily. EngA (Der) GTPase family.</text>
</comment>
<organism>
    <name type="scientific">Chlorobaculum parvum (strain DSM 263 / NCIMB 8327)</name>
    <name type="common">Chlorobium vibrioforme subsp. thiosulfatophilum</name>
    <dbReference type="NCBI Taxonomy" id="517417"/>
    <lineage>
        <taxon>Bacteria</taxon>
        <taxon>Pseudomonadati</taxon>
        <taxon>Chlorobiota</taxon>
        <taxon>Chlorobiia</taxon>
        <taxon>Chlorobiales</taxon>
        <taxon>Chlorobiaceae</taxon>
        <taxon>Chlorobaculum</taxon>
    </lineage>
</organism>
<proteinExistence type="inferred from homology"/>
<gene>
    <name evidence="1" type="primary">der</name>
    <name type="synonym">engA</name>
    <name type="ordered locus">Cpar_0422</name>
</gene>
<evidence type="ECO:0000255" key="1">
    <source>
        <dbReference type="HAMAP-Rule" id="MF_00195"/>
    </source>
</evidence>
<protein>
    <recommendedName>
        <fullName evidence="1">GTPase Der</fullName>
    </recommendedName>
    <alternativeName>
        <fullName evidence="1">GTP-binding protein EngA</fullName>
    </alternativeName>
</protein>